<dbReference type="EC" id="5.4.3.8" evidence="1"/>
<dbReference type="EMBL" id="CP000305">
    <property type="protein sequence ID" value="ABG17033.1"/>
    <property type="molecule type" value="Genomic_DNA"/>
</dbReference>
<dbReference type="EMBL" id="ACNQ01000007">
    <property type="protein sequence ID" value="EEO77893.1"/>
    <property type="molecule type" value="Genomic_DNA"/>
</dbReference>
<dbReference type="RefSeq" id="WP_002209362.1">
    <property type="nucleotide sequence ID" value="NZ_ACNQ01000007.1"/>
</dbReference>
<dbReference type="SMR" id="Q1CLU7"/>
<dbReference type="GeneID" id="57975320"/>
<dbReference type="KEGG" id="ypn:YPN_0701"/>
<dbReference type="HOGENOM" id="CLU_016922_1_5_6"/>
<dbReference type="UniPathway" id="UPA00251">
    <property type="reaction ID" value="UER00317"/>
</dbReference>
<dbReference type="Proteomes" id="UP000008936">
    <property type="component" value="Chromosome"/>
</dbReference>
<dbReference type="GO" id="GO:0005737">
    <property type="term" value="C:cytoplasm"/>
    <property type="evidence" value="ECO:0007669"/>
    <property type="project" value="UniProtKB-SubCell"/>
</dbReference>
<dbReference type="GO" id="GO:0042286">
    <property type="term" value="F:glutamate-1-semialdehyde 2,1-aminomutase activity"/>
    <property type="evidence" value="ECO:0007669"/>
    <property type="project" value="UniProtKB-UniRule"/>
</dbReference>
<dbReference type="GO" id="GO:0030170">
    <property type="term" value="F:pyridoxal phosphate binding"/>
    <property type="evidence" value="ECO:0007669"/>
    <property type="project" value="InterPro"/>
</dbReference>
<dbReference type="GO" id="GO:0008483">
    <property type="term" value="F:transaminase activity"/>
    <property type="evidence" value="ECO:0007669"/>
    <property type="project" value="InterPro"/>
</dbReference>
<dbReference type="GO" id="GO:0006782">
    <property type="term" value="P:protoporphyrinogen IX biosynthetic process"/>
    <property type="evidence" value="ECO:0007669"/>
    <property type="project" value="UniProtKB-UniRule"/>
</dbReference>
<dbReference type="CDD" id="cd00610">
    <property type="entry name" value="OAT_like"/>
    <property type="match status" value="1"/>
</dbReference>
<dbReference type="FunFam" id="3.40.640.10:FF:000021">
    <property type="entry name" value="Glutamate-1-semialdehyde 2,1-aminomutase"/>
    <property type="match status" value="1"/>
</dbReference>
<dbReference type="FunFam" id="3.90.1150.10:FF:000012">
    <property type="entry name" value="Glutamate-1-semialdehyde 2,1-aminomutase"/>
    <property type="match status" value="1"/>
</dbReference>
<dbReference type="Gene3D" id="3.90.1150.10">
    <property type="entry name" value="Aspartate Aminotransferase, domain 1"/>
    <property type="match status" value="1"/>
</dbReference>
<dbReference type="Gene3D" id="3.40.640.10">
    <property type="entry name" value="Type I PLP-dependent aspartate aminotransferase-like (Major domain)"/>
    <property type="match status" value="1"/>
</dbReference>
<dbReference type="HAMAP" id="MF_00375">
    <property type="entry name" value="HemL_aminotrans_3"/>
    <property type="match status" value="1"/>
</dbReference>
<dbReference type="InterPro" id="IPR004639">
    <property type="entry name" value="4pyrrol_synth_GluAld_NH2Trfase"/>
</dbReference>
<dbReference type="InterPro" id="IPR005814">
    <property type="entry name" value="Aminotrans_3"/>
</dbReference>
<dbReference type="InterPro" id="IPR049704">
    <property type="entry name" value="Aminotrans_3_PPA_site"/>
</dbReference>
<dbReference type="InterPro" id="IPR015424">
    <property type="entry name" value="PyrdxlP-dep_Trfase"/>
</dbReference>
<dbReference type="InterPro" id="IPR015421">
    <property type="entry name" value="PyrdxlP-dep_Trfase_major"/>
</dbReference>
<dbReference type="InterPro" id="IPR015422">
    <property type="entry name" value="PyrdxlP-dep_Trfase_small"/>
</dbReference>
<dbReference type="NCBIfam" id="TIGR00713">
    <property type="entry name" value="hemL"/>
    <property type="match status" value="1"/>
</dbReference>
<dbReference type="NCBIfam" id="NF000818">
    <property type="entry name" value="PRK00062.1"/>
    <property type="match status" value="1"/>
</dbReference>
<dbReference type="PANTHER" id="PTHR43713">
    <property type="entry name" value="GLUTAMATE-1-SEMIALDEHYDE 2,1-AMINOMUTASE"/>
    <property type="match status" value="1"/>
</dbReference>
<dbReference type="PANTHER" id="PTHR43713:SF3">
    <property type="entry name" value="GLUTAMATE-1-SEMIALDEHYDE 2,1-AMINOMUTASE 1, CHLOROPLASTIC-RELATED"/>
    <property type="match status" value="1"/>
</dbReference>
<dbReference type="Pfam" id="PF00202">
    <property type="entry name" value="Aminotran_3"/>
    <property type="match status" value="1"/>
</dbReference>
<dbReference type="SUPFAM" id="SSF53383">
    <property type="entry name" value="PLP-dependent transferases"/>
    <property type="match status" value="1"/>
</dbReference>
<dbReference type="PROSITE" id="PS00600">
    <property type="entry name" value="AA_TRANSFER_CLASS_3"/>
    <property type="match status" value="1"/>
</dbReference>
<proteinExistence type="inferred from homology"/>
<name>GSA_YERPN</name>
<accession>Q1CLU7</accession>
<accession>C4GQ67</accession>
<comment type="catalytic activity">
    <reaction evidence="1">
        <text>(S)-4-amino-5-oxopentanoate = 5-aminolevulinate</text>
        <dbReference type="Rhea" id="RHEA:14265"/>
        <dbReference type="ChEBI" id="CHEBI:57501"/>
        <dbReference type="ChEBI" id="CHEBI:356416"/>
        <dbReference type="EC" id="5.4.3.8"/>
    </reaction>
</comment>
<comment type="cofactor">
    <cofactor evidence="1">
        <name>pyridoxal 5'-phosphate</name>
        <dbReference type="ChEBI" id="CHEBI:597326"/>
    </cofactor>
</comment>
<comment type="pathway">
    <text evidence="1">Porphyrin-containing compound metabolism; protoporphyrin-IX biosynthesis; 5-aminolevulinate from L-glutamyl-tRNA(Glu): step 2/2.</text>
</comment>
<comment type="subunit">
    <text evidence="1">Homodimer.</text>
</comment>
<comment type="subcellular location">
    <subcellularLocation>
        <location evidence="1">Cytoplasm</location>
    </subcellularLocation>
</comment>
<comment type="similarity">
    <text evidence="1">Belongs to the class-III pyridoxal-phosphate-dependent aminotransferase family. HemL subfamily.</text>
</comment>
<protein>
    <recommendedName>
        <fullName evidence="1">Glutamate-1-semialdehyde 2,1-aminomutase</fullName>
        <shortName evidence="1">GSA</shortName>
        <ecNumber evidence="1">5.4.3.8</ecNumber>
    </recommendedName>
    <alternativeName>
        <fullName evidence="1">Glutamate-1-semialdehyde aminotransferase</fullName>
        <shortName evidence="1">GSA-AT</shortName>
    </alternativeName>
</protein>
<organism>
    <name type="scientific">Yersinia pestis bv. Antiqua (strain Nepal516)</name>
    <dbReference type="NCBI Taxonomy" id="377628"/>
    <lineage>
        <taxon>Bacteria</taxon>
        <taxon>Pseudomonadati</taxon>
        <taxon>Pseudomonadota</taxon>
        <taxon>Gammaproteobacteria</taxon>
        <taxon>Enterobacterales</taxon>
        <taxon>Yersiniaceae</taxon>
        <taxon>Yersinia</taxon>
    </lineage>
</organism>
<evidence type="ECO:0000255" key="1">
    <source>
        <dbReference type="HAMAP-Rule" id="MF_00375"/>
    </source>
</evidence>
<reference key="1">
    <citation type="journal article" date="2006" name="J. Bacteriol.">
        <title>Complete genome sequence of Yersinia pestis strains Antiqua and Nepal516: evidence of gene reduction in an emerging pathogen.</title>
        <authorList>
            <person name="Chain P.S.G."/>
            <person name="Hu P."/>
            <person name="Malfatti S.A."/>
            <person name="Radnedge L."/>
            <person name="Larimer F."/>
            <person name="Vergez L.M."/>
            <person name="Worsham P."/>
            <person name="Chu M.C."/>
            <person name="Andersen G.L."/>
        </authorList>
    </citation>
    <scope>NUCLEOTIDE SEQUENCE [LARGE SCALE GENOMIC DNA]</scope>
    <source>
        <strain>Nepal516</strain>
    </source>
</reference>
<reference key="2">
    <citation type="submission" date="2009-04" db="EMBL/GenBank/DDBJ databases">
        <title>Yersinia pestis Nepal516A whole genome shotgun sequencing project.</title>
        <authorList>
            <person name="Plunkett G. III"/>
            <person name="Anderson B.D."/>
            <person name="Baumler D.J."/>
            <person name="Burland V."/>
            <person name="Cabot E.L."/>
            <person name="Glasner J.D."/>
            <person name="Mau B."/>
            <person name="Neeno-Eckwall E."/>
            <person name="Perna N.T."/>
            <person name="Munk A.C."/>
            <person name="Tapia R."/>
            <person name="Green L.D."/>
            <person name="Rogers Y.C."/>
            <person name="Detter J.C."/>
            <person name="Bruce D.C."/>
            <person name="Brettin T.S."/>
        </authorList>
    </citation>
    <scope>NUCLEOTIDE SEQUENCE [LARGE SCALE GENOMIC DNA]</scope>
    <source>
        <strain>Nepal516</strain>
    </source>
</reference>
<gene>
    <name evidence="1" type="primary">hemL</name>
    <name type="ordered locus">YPN_0701</name>
    <name type="ORF">YP516_0745</name>
</gene>
<sequence length="426" mass="45794">MSKSENLYAQAQQLIPGGVNSPVRAFTGVGGIPLFIERADGAYLFDVDGKAYIDYVGSWGPMILGHNHPAIRQAVIEAVERGLSFGAPTEMEVKMAQLVTDLVPTMDMVRMVNSGTEATMSAIRLARGYTGRDKIIKFEGCYHGHADCLLVKAGSGALTLGQPNSPGVPTDFAKHTLTCTYNDLASVRQAFEQYPQEVACIIVEPVAGNMNCIPPLPEFLPGLRALCDEFGALLIIDEVMTGFRVALAGAQDYYHVIPDLTCLGKIIGGGMPVGAFGGRREVMNALAPTGPVYQAGTLSGNPIAMAAGFACLTEISQVGVYETLTELTDSLATGLRHAAKEENIPLVVNHVGGMFGLFFTNADTVTCYQDVMNCDVERFKRFFHLMLEEGVYLAPSAFEAGFMSLAHSNEDIQKTVNAARRCFAKL</sequence>
<feature type="chain" id="PRO_0000300961" description="Glutamate-1-semialdehyde 2,1-aminomutase">
    <location>
        <begin position="1"/>
        <end position="426"/>
    </location>
</feature>
<feature type="modified residue" description="N6-(pyridoxal phosphate)lysine" evidence="1">
    <location>
        <position position="265"/>
    </location>
</feature>
<keyword id="KW-0963">Cytoplasm</keyword>
<keyword id="KW-0413">Isomerase</keyword>
<keyword id="KW-0627">Porphyrin biosynthesis</keyword>
<keyword id="KW-0663">Pyridoxal phosphate</keyword>